<gene>
    <name evidence="1" type="primary">ilvC</name>
    <name type="ordered locus">BUAPTUC7_592</name>
</gene>
<comment type="function">
    <text evidence="1">Involved in the biosynthesis of branched-chain amino acids (BCAA). Catalyzes an alkyl-migration followed by a ketol-acid reduction of (S)-2-acetolactate (S2AL) to yield (R)-2,3-dihydroxy-isovalerate. In the isomerase reaction, S2AL is rearranged via a Mg-dependent methyl migration to produce 3-hydroxy-3-methyl-2-ketobutyrate (HMKB). In the reductase reaction, this 2-ketoacid undergoes a metal-dependent reduction by NADPH to yield (R)-2,3-dihydroxy-isovalerate.</text>
</comment>
<comment type="catalytic activity">
    <reaction evidence="1">
        <text>(2R)-2,3-dihydroxy-3-methylbutanoate + NADP(+) = (2S)-2-acetolactate + NADPH + H(+)</text>
        <dbReference type="Rhea" id="RHEA:22068"/>
        <dbReference type="ChEBI" id="CHEBI:15378"/>
        <dbReference type="ChEBI" id="CHEBI:49072"/>
        <dbReference type="ChEBI" id="CHEBI:57783"/>
        <dbReference type="ChEBI" id="CHEBI:58349"/>
        <dbReference type="ChEBI" id="CHEBI:58476"/>
        <dbReference type="EC" id="1.1.1.86"/>
    </reaction>
</comment>
<comment type="catalytic activity">
    <reaction evidence="1">
        <text>(2R,3R)-2,3-dihydroxy-3-methylpentanoate + NADP(+) = (S)-2-ethyl-2-hydroxy-3-oxobutanoate + NADPH + H(+)</text>
        <dbReference type="Rhea" id="RHEA:13493"/>
        <dbReference type="ChEBI" id="CHEBI:15378"/>
        <dbReference type="ChEBI" id="CHEBI:49256"/>
        <dbReference type="ChEBI" id="CHEBI:49258"/>
        <dbReference type="ChEBI" id="CHEBI:57783"/>
        <dbReference type="ChEBI" id="CHEBI:58349"/>
        <dbReference type="EC" id="1.1.1.86"/>
    </reaction>
</comment>
<comment type="cofactor">
    <cofactor evidence="1">
        <name>Mg(2+)</name>
        <dbReference type="ChEBI" id="CHEBI:18420"/>
    </cofactor>
    <text evidence="1">Binds 2 magnesium ions per subunit.</text>
</comment>
<comment type="pathway">
    <text evidence="1">Amino-acid biosynthesis; L-isoleucine biosynthesis; L-isoleucine from 2-oxobutanoate: step 2/4.</text>
</comment>
<comment type="pathway">
    <text evidence="1">Amino-acid biosynthesis; L-valine biosynthesis; L-valine from pyruvate: step 2/4.</text>
</comment>
<comment type="similarity">
    <text evidence="1">Belongs to the ketol-acid reductoisomerase family.</text>
</comment>
<protein>
    <recommendedName>
        <fullName evidence="1">Ketol-acid reductoisomerase (NADP(+))</fullName>
        <shortName evidence="1">KARI</shortName>
        <ecNumber evidence="1">1.1.1.86</ecNumber>
    </recommendedName>
    <alternativeName>
        <fullName evidence="1">Acetohydroxy-acid isomeroreductase</fullName>
        <shortName evidence="1">AHIR</shortName>
    </alternativeName>
    <alternativeName>
        <fullName evidence="1">Alpha-keto-beta-hydroxylacyl reductoisomerase</fullName>
    </alternativeName>
    <alternativeName>
        <fullName evidence="1">Ketol-acid reductoisomerase type 2</fullName>
    </alternativeName>
    <alternativeName>
        <fullName evidence="1">Ketol-acid reductoisomerase type II</fullName>
    </alternativeName>
</protein>
<reference key="1">
    <citation type="journal article" date="2009" name="Science">
        <title>The dynamics and time scale of ongoing genomic erosion in symbiotic bacteria.</title>
        <authorList>
            <person name="Moran N.A."/>
            <person name="McLaughlin H.J."/>
            <person name="Sorek R."/>
        </authorList>
    </citation>
    <scope>NUCLEOTIDE SEQUENCE [LARGE SCALE GENOMIC DNA]</scope>
    <source>
        <strain>Tuc7</strain>
    </source>
</reference>
<organism>
    <name type="scientific">Buchnera aphidicola subsp. Acyrthosiphon pisum (strain Tuc7)</name>
    <dbReference type="NCBI Taxonomy" id="561501"/>
    <lineage>
        <taxon>Bacteria</taxon>
        <taxon>Pseudomonadati</taxon>
        <taxon>Pseudomonadota</taxon>
        <taxon>Gammaproteobacteria</taxon>
        <taxon>Enterobacterales</taxon>
        <taxon>Erwiniaceae</taxon>
        <taxon>Buchnera</taxon>
    </lineage>
</organism>
<proteinExistence type="inferred from homology"/>
<dbReference type="EC" id="1.1.1.86" evidence="1"/>
<dbReference type="EMBL" id="CP001158">
    <property type="protein sequence ID" value="ACL30379.1"/>
    <property type="molecule type" value="Genomic_DNA"/>
</dbReference>
<dbReference type="SMR" id="B8D8B4"/>
<dbReference type="KEGG" id="bau:BUAPTUC7_592"/>
<dbReference type="HOGENOM" id="CLU_551905_0_0_6"/>
<dbReference type="UniPathway" id="UPA00047">
    <property type="reaction ID" value="UER00056"/>
</dbReference>
<dbReference type="UniPathway" id="UPA00049">
    <property type="reaction ID" value="UER00060"/>
</dbReference>
<dbReference type="GO" id="GO:0005829">
    <property type="term" value="C:cytosol"/>
    <property type="evidence" value="ECO:0007669"/>
    <property type="project" value="TreeGrafter"/>
</dbReference>
<dbReference type="GO" id="GO:0004455">
    <property type="term" value="F:ketol-acid reductoisomerase activity"/>
    <property type="evidence" value="ECO:0007669"/>
    <property type="project" value="UniProtKB-UniRule"/>
</dbReference>
<dbReference type="GO" id="GO:0000287">
    <property type="term" value="F:magnesium ion binding"/>
    <property type="evidence" value="ECO:0007669"/>
    <property type="project" value="UniProtKB-UniRule"/>
</dbReference>
<dbReference type="GO" id="GO:0009097">
    <property type="term" value="P:isoleucine biosynthetic process"/>
    <property type="evidence" value="ECO:0007669"/>
    <property type="project" value="UniProtKB-UniRule"/>
</dbReference>
<dbReference type="GO" id="GO:0009099">
    <property type="term" value="P:L-valine biosynthetic process"/>
    <property type="evidence" value="ECO:0007669"/>
    <property type="project" value="UniProtKB-UniRule"/>
</dbReference>
<dbReference type="Gene3D" id="1.10.1040.10">
    <property type="entry name" value="N-(1-d-carboxylethyl)-l-norvaline Dehydrogenase, domain 2"/>
    <property type="match status" value="1"/>
</dbReference>
<dbReference type="Gene3D" id="3.40.50.720">
    <property type="entry name" value="NAD(P)-binding Rossmann-like Domain"/>
    <property type="match status" value="1"/>
</dbReference>
<dbReference type="HAMAP" id="MF_00435">
    <property type="entry name" value="IlvC"/>
    <property type="match status" value="1"/>
</dbReference>
<dbReference type="InterPro" id="IPR008927">
    <property type="entry name" value="6-PGluconate_DH-like_C_sf"/>
</dbReference>
<dbReference type="InterPro" id="IPR013328">
    <property type="entry name" value="6PGD_dom2"/>
</dbReference>
<dbReference type="InterPro" id="IPR013023">
    <property type="entry name" value="KARI"/>
</dbReference>
<dbReference type="InterPro" id="IPR000506">
    <property type="entry name" value="KARI_C"/>
</dbReference>
<dbReference type="InterPro" id="IPR013116">
    <property type="entry name" value="KARI_N"/>
</dbReference>
<dbReference type="InterPro" id="IPR036291">
    <property type="entry name" value="NAD(P)-bd_dom_sf"/>
</dbReference>
<dbReference type="NCBIfam" id="TIGR00465">
    <property type="entry name" value="ilvC"/>
    <property type="match status" value="1"/>
</dbReference>
<dbReference type="NCBIfam" id="NF003557">
    <property type="entry name" value="PRK05225.1"/>
    <property type="match status" value="1"/>
</dbReference>
<dbReference type="PANTHER" id="PTHR21371">
    <property type="entry name" value="KETOL-ACID REDUCTOISOMERASE, MITOCHONDRIAL"/>
    <property type="match status" value="1"/>
</dbReference>
<dbReference type="PANTHER" id="PTHR21371:SF1">
    <property type="entry name" value="KETOL-ACID REDUCTOISOMERASE, MITOCHONDRIAL"/>
    <property type="match status" value="1"/>
</dbReference>
<dbReference type="Pfam" id="PF01450">
    <property type="entry name" value="KARI_C"/>
    <property type="match status" value="2"/>
</dbReference>
<dbReference type="Pfam" id="PF07991">
    <property type="entry name" value="KARI_N"/>
    <property type="match status" value="1"/>
</dbReference>
<dbReference type="SUPFAM" id="SSF48179">
    <property type="entry name" value="6-phosphogluconate dehydrogenase C-terminal domain-like"/>
    <property type="match status" value="2"/>
</dbReference>
<dbReference type="SUPFAM" id="SSF51735">
    <property type="entry name" value="NAD(P)-binding Rossmann-fold domains"/>
    <property type="match status" value="1"/>
</dbReference>
<dbReference type="PROSITE" id="PS51851">
    <property type="entry name" value="KARI_C"/>
    <property type="match status" value="2"/>
</dbReference>
<dbReference type="PROSITE" id="PS51850">
    <property type="entry name" value="KARI_N"/>
    <property type="match status" value="1"/>
</dbReference>
<keyword id="KW-0028">Amino-acid biosynthesis</keyword>
<keyword id="KW-0100">Branched-chain amino acid biosynthesis</keyword>
<keyword id="KW-0460">Magnesium</keyword>
<keyword id="KW-0479">Metal-binding</keyword>
<keyword id="KW-0521">NADP</keyword>
<keyword id="KW-0560">Oxidoreductase</keyword>
<keyword id="KW-0677">Repeat</keyword>
<sequence>MNYFNTLNFTQKINQINKCRFMKKEEFNKKNDILKNKNIVIVGCGAQGLNQGLNMRDAGLNISYALKKNSIANKNQSWINAIENNFKVDDYDALIPDADLVINLTPDKQHHSVIKKLQKLMKKNAVLGYSHGFNIVEFGEKIRKDITVIMVAPKCPGTEVREEYKRGFGVPTLIAVHHENDINKIGLEVAKAWAFSTGGHRAGVLESSFIAEVKSDLMGEQTILCGMLQTASLLCYEKLITEKCNPAYSAKLIQNGWETITESLKHGGITLMMDRLSNSSKIRAYKLSKEIKKILSPLFQKHMDDIISGEFSNEMMKDWENQDLKLLNWRYKTKNTSFETAPVYNEKIPEQEYYDHGILMIAILKSGIELSFEKMIETGIKEESAYYESLHELPLIANTIARKKLYEMNKVISDTAEYGSYLFSESAYPILKEFISTLNKSDLGCALSHQSVNNIELYRINQKIQNHPIEIIGCTLRNYMKKMKAITVAK</sequence>
<accession>B8D8B4</accession>
<evidence type="ECO:0000255" key="1">
    <source>
        <dbReference type="HAMAP-Rule" id="MF_00435"/>
    </source>
</evidence>
<evidence type="ECO:0000255" key="2">
    <source>
        <dbReference type="PROSITE-ProRule" id="PRU01197"/>
    </source>
</evidence>
<evidence type="ECO:0000255" key="3">
    <source>
        <dbReference type="PROSITE-ProRule" id="PRU01198"/>
    </source>
</evidence>
<name>ILVC_BUCAT</name>
<feature type="chain" id="PRO_1000190918" description="Ketol-acid reductoisomerase (NADP(+))">
    <location>
        <begin position="1"/>
        <end position="490"/>
    </location>
</feature>
<feature type="domain" description="KARI N-terminal Rossmann" evidence="2">
    <location>
        <begin position="16"/>
        <end position="207"/>
    </location>
</feature>
<feature type="domain" description="KARI C-terminal knotted 1" evidence="3">
    <location>
        <begin position="208"/>
        <end position="343"/>
    </location>
</feature>
<feature type="domain" description="KARI C-terminal knotted 2" evidence="3">
    <location>
        <begin position="344"/>
        <end position="483"/>
    </location>
</feature>
<feature type="active site" evidence="1">
    <location>
        <position position="131"/>
    </location>
</feature>
<feature type="binding site" evidence="1">
    <location>
        <begin position="44"/>
        <end position="47"/>
    </location>
    <ligand>
        <name>NADP(+)</name>
        <dbReference type="ChEBI" id="CHEBI:58349"/>
    </ligand>
</feature>
<feature type="binding site" evidence="1">
    <location>
        <position position="67"/>
    </location>
    <ligand>
        <name>NADP(+)</name>
        <dbReference type="ChEBI" id="CHEBI:58349"/>
    </ligand>
</feature>
<feature type="binding site" evidence="1">
    <location>
        <position position="77"/>
    </location>
    <ligand>
        <name>NADP(+)</name>
        <dbReference type="ChEBI" id="CHEBI:58349"/>
    </ligand>
</feature>
<feature type="binding site" evidence="1">
    <location>
        <begin position="107"/>
        <end position="109"/>
    </location>
    <ligand>
        <name>NADP(+)</name>
        <dbReference type="ChEBI" id="CHEBI:58349"/>
    </ligand>
</feature>
<feature type="binding site" evidence="1">
    <location>
        <position position="157"/>
    </location>
    <ligand>
        <name>NADP(+)</name>
        <dbReference type="ChEBI" id="CHEBI:58349"/>
    </ligand>
</feature>
<feature type="binding site" evidence="1">
    <location>
        <position position="216"/>
    </location>
    <ligand>
        <name>Mg(2+)</name>
        <dbReference type="ChEBI" id="CHEBI:18420"/>
        <label>1</label>
    </ligand>
</feature>
<feature type="binding site" evidence="1">
    <location>
        <position position="216"/>
    </location>
    <ligand>
        <name>Mg(2+)</name>
        <dbReference type="ChEBI" id="CHEBI:18420"/>
        <label>2</label>
    </ligand>
</feature>
<feature type="binding site" evidence="1">
    <location>
        <position position="220"/>
    </location>
    <ligand>
        <name>Mg(2+)</name>
        <dbReference type="ChEBI" id="CHEBI:18420"/>
        <label>1</label>
    </ligand>
</feature>
<feature type="binding site" evidence="1">
    <location>
        <position position="388"/>
    </location>
    <ligand>
        <name>Mg(2+)</name>
        <dbReference type="ChEBI" id="CHEBI:18420"/>
        <label>2</label>
    </ligand>
</feature>
<feature type="binding site" evidence="1">
    <location>
        <position position="392"/>
    </location>
    <ligand>
        <name>Mg(2+)</name>
        <dbReference type="ChEBI" id="CHEBI:18420"/>
        <label>2</label>
    </ligand>
</feature>
<feature type="binding site" evidence="1">
    <location>
        <position position="413"/>
    </location>
    <ligand>
        <name>substrate</name>
    </ligand>
</feature>